<reference key="1">
    <citation type="journal article" date="2011" name="J. Bacteriol.">
        <title>Comparative genomics of 28 Salmonella enterica isolates: evidence for CRISPR-mediated adaptive sublineage evolution.</title>
        <authorList>
            <person name="Fricke W.F."/>
            <person name="Mammel M.K."/>
            <person name="McDermott P.F."/>
            <person name="Tartera C."/>
            <person name="White D.G."/>
            <person name="Leclerc J.E."/>
            <person name="Ravel J."/>
            <person name="Cebula T.A."/>
        </authorList>
    </citation>
    <scope>NUCLEOTIDE SEQUENCE [LARGE SCALE GENOMIC DNA]</scope>
    <source>
        <strain>CT_02021853</strain>
    </source>
</reference>
<accession>B5FUB8</accession>
<dbReference type="EMBL" id="CP001144">
    <property type="protein sequence ID" value="ACH75503.1"/>
    <property type="molecule type" value="Genomic_DNA"/>
</dbReference>
<dbReference type="RefSeq" id="WP_000004686.1">
    <property type="nucleotide sequence ID" value="NC_011205.1"/>
</dbReference>
<dbReference type="SMR" id="B5FUB8"/>
<dbReference type="KEGG" id="sed:SeD_A3337"/>
<dbReference type="HOGENOM" id="CLU_047399_0_0_6"/>
<dbReference type="Proteomes" id="UP000008322">
    <property type="component" value="Chromosome"/>
</dbReference>
<dbReference type="GO" id="GO:0005886">
    <property type="term" value="C:plasma membrane"/>
    <property type="evidence" value="ECO:0007669"/>
    <property type="project" value="UniProtKB-SubCell"/>
</dbReference>
<dbReference type="GO" id="GO:0051978">
    <property type="term" value="F:lysophospholipid:sodium symporter activity"/>
    <property type="evidence" value="ECO:0007669"/>
    <property type="project" value="InterPro"/>
</dbReference>
<dbReference type="CDD" id="cd06173">
    <property type="entry name" value="MFS_MefA_like"/>
    <property type="match status" value="1"/>
</dbReference>
<dbReference type="Gene3D" id="1.20.1250.20">
    <property type="entry name" value="MFS general substrate transporter like domains"/>
    <property type="match status" value="1"/>
</dbReference>
<dbReference type="HAMAP" id="MF_01585">
    <property type="entry name" value="MFS_LplT"/>
    <property type="match status" value="1"/>
</dbReference>
<dbReference type="InterPro" id="IPR023727">
    <property type="entry name" value="LysoPLipid__transptr_LplT"/>
</dbReference>
<dbReference type="InterPro" id="IPR011701">
    <property type="entry name" value="MFS"/>
</dbReference>
<dbReference type="InterPro" id="IPR036259">
    <property type="entry name" value="MFS_trans_sf"/>
</dbReference>
<dbReference type="NCBIfam" id="NF008397">
    <property type="entry name" value="PRK11195.1"/>
    <property type="match status" value="1"/>
</dbReference>
<dbReference type="PANTHER" id="PTHR43266">
    <property type="entry name" value="MACROLIDE-EFFLUX PROTEIN"/>
    <property type="match status" value="1"/>
</dbReference>
<dbReference type="PANTHER" id="PTHR43266:SF2">
    <property type="entry name" value="MAJOR FACILITATOR SUPERFAMILY (MFS) PROFILE DOMAIN-CONTAINING PROTEIN"/>
    <property type="match status" value="1"/>
</dbReference>
<dbReference type="Pfam" id="PF07690">
    <property type="entry name" value="MFS_1"/>
    <property type="match status" value="1"/>
</dbReference>
<dbReference type="SUPFAM" id="SSF103473">
    <property type="entry name" value="MFS general substrate transporter"/>
    <property type="match status" value="1"/>
</dbReference>
<feature type="chain" id="PRO_1000201274" description="Lysophospholipid transporter LplT">
    <location>
        <begin position="1"/>
        <end position="400"/>
    </location>
</feature>
<feature type="transmembrane region" description="Helical" evidence="1">
    <location>
        <begin position="19"/>
        <end position="39"/>
    </location>
</feature>
<feature type="transmembrane region" description="Helical" evidence="1">
    <location>
        <begin position="53"/>
        <end position="73"/>
    </location>
</feature>
<feature type="transmembrane region" description="Helical" evidence="1">
    <location>
        <begin position="91"/>
        <end position="111"/>
    </location>
</feature>
<feature type="transmembrane region" description="Helical" evidence="1">
    <location>
        <begin position="139"/>
        <end position="159"/>
    </location>
</feature>
<feature type="transmembrane region" description="Helical" evidence="1">
    <location>
        <begin position="164"/>
        <end position="184"/>
    </location>
</feature>
<feature type="transmembrane region" description="Helical" evidence="1">
    <location>
        <begin position="195"/>
        <end position="213"/>
    </location>
</feature>
<feature type="transmembrane region" description="Helical" evidence="1">
    <location>
        <begin position="227"/>
        <end position="247"/>
    </location>
</feature>
<feature type="transmembrane region" description="Helical" evidence="1">
    <location>
        <begin position="257"/>
        <end position="277"/>
    </location>
</feature>
<feature type="transmembrane region" description="Helical" evidence="1">
    <location>
        <begin position="281"/>
        <end position="301"/>
    </location>
</feature>
<feature type="transmembrane region" description="Helical" evidence="1">
    <location>
        <begin position="304"/>
        <end position="324"/>
    </location>
</feature>
<feature type="transmembrane region" description="Helical" evidence="1">
    <location>
        <begin position="352"/>
        <end position="372"/>
    </location>
</feature>
<feature type="transmembrane region" description="Helical" evidence="1">
    <location>
        <begin position="373"/>
        <end position="393"/>
    </location>
</feature>
<proteinExistence type="inferred from homology"/>
<gene>
    <name evidence="1" type="primary">lplT</name>
    <name type="ordered locus">SeD_A3337</name>
</gene>
<protein>
    <recommendedName>
        <fullName evidence="1">Lysophospholipid transporter LplT</fullName>
    </recommendedName>
</protein>
<name>LPLT_SALDC</name>
<keyword id="KW-0997">Cell inner membrane</keyword>
<keyword id="KW-1003">Cell membrane</keyword>
<keyword id="KW-0445">Lipid transport</keyword>
<keyword id="KW-0472">Membrane</keyword>
<keyword id="KW-0812">Transmembrane</keyword>
<keyword id="KW-1133">Transmembrane helix</keyword>
<keyword id="KW-0813">Transport</keyword>
<comment type="function">
    <text evidence="1">Catalyzes the facilitated diffusion of 2-acyl-glycero-3-phosphoethanolamine (2-acyl-GPE) into the cell.</text>
</comment>
<comment type="subcellular location">
    <subcellularLocation>
        <location evidence="1">Cell inner membrane</location>
        <topology evidence="1">Multi-pass membrane protein</topology>
    </subcellularLocation>
</comment>
<comment type="similarity">
    <text evidence="1">Belongs to the major facilitator superfamily. LplT (TC 2.A.1.42) family.</text>
</comment>
<sequence>MSESVRTNTSIWSKGMLSVIVAQFLSAFGDNALLFATLALLKAQFYPDWSQPVLQMVFVGAYILFAPFVGQIADSFAKGRVMMVANGLKLAGAAGICLGVNPFVGYTLVGIGAAAYSPAKYGILGELTTGDKLVKANGLMEASTIAAILLGSVAGGVLADWHVIAALVACALAYAGAVAANLFIPKLVAARPGQSWRLSAMTRSFFSACVVLWRNGETRFSLVGTGLFWGAGVTLRFLLVLWVPVALGITDNATPTYLNAMVAVGIVVGAGAAAKLVTLETVSRCMPAGILIGVVVAIFSLQHALLPAYALLLLIGMLGGFFVVPLNALLQERGKKSVGAGNAIAVQNLGENSAMLLMLGLYSLAVLVGVPAVAIGIGFGVLFALAIAALWIWQRRQASY</sequence>
<organism>
    <name type="scientific">Salmonella dublin (strain CT_02021853)</name>
    <dbReference type="NCBI Taxonomy" id="439851"/>
    <lineage>
        <taxon>Bacteria</taxon>
        <taxon>Pseudomonadati</taxon>
        <taxon>Pseudomonadota</taxon>
        <taxon>Gammaproteobacteria</taxon>
        <taxon>Enterobacterales</taxon>
        <taxon>Enterobacteriaceae</taxon>
        <taxon>Salmonella</taxon>
    </lineage>
</organism>
<evidence type="ECO:0000255" key="1">
    <source>
        <dbReference type="HAMAP-Rule" id="MF_01585"/>
    </source>
</evidence>